<dbReference type="EC" id="2.1.1.173" evidence="1"/>
<dbReference type="EC" id="2.1.1.264" evidence="1"/>
<dbReference type="EMBL" id="CP000075">
    <property type="protein sequence ID" value="AAY37151.1"/>
    <property type="molecule type" value="Genomic_DNA"/>
</dbReference>
<dbReference type="RefSeq" id="YP_235189.1">
    <property type="nucleotide sequence ID" value="NC_007005.1"/>
</dbReference>
<dbReference type="SMR" id="Q4ZUM1"/>
<dbReference type="STRING" id="205918.Psyr_2108"/>
<dbReference type="KEGG" id="psb:Psyr_2108"/>
<dbReference type="PATRIC" id="fig|205918.7.peg.2154"/>
<dbReference type="eggNOG" id="COG0116">
    <property type="taxonomic scope" value="Bacteria"/>
</dbReference>
<dbReference type="eggNOG" id="COG1092">
    <property type="taxonomic scope" value="Bacteria"/>
</dbReference>
<dbReference type="HOGENOM" id="CLU_014042_2_0_6"/>
<dbReference type="OrthoDB" id="9809404at2"/>
<dbReference type="Proteomes" id="UP000000426">
    <property type="component" value="Chromosome"/>
</dbReference>
<dbReference type="GO" id="GO:0005737">
    <property type="term" value="C:cytoplasm"/>
    <property type="evidence" value="ECO:0007669"/>
    <property type="project" value="UniProtKB-SubCell"/>
</dbReference>
<dbReference type="GO" id="GO:0052915">
    <property type="term" value="F:23S rRNA (guanine(2445)-N(2))-methyltransferase activity"/>
    <property type="evidence" value="ECO:0007669"/>
    <property type="project" value="UniProtKB-UniRule"/>
</dbReference>
<dbReference type="GO" id="GO:0003723">
    <property type="term" value="F:RNA binding"/>
    <property type="evidence" value="ECO:0007669"/>
    <property type="project" value="UniProtKB-KW"/>
</dbReference>
<dbReference type="GO" id="GO:0070043">
    <property type="term" value="F:rRNA (guanine-N7-)-methyltransferase activity"/>
    <property type="evidence" value="ECO:0007669"/>
    <property type="project" value="UniProtKB-UniRule"/>
</dbReference>
<dbReference type="CDD" id="cd02440">
    <property type="entry name" value="AdoMet_MTases"/>
    <property type="match status" value="1"/>
</dbReference>
<dbReference type="CDD" id="cd11715">
    <property type="entry name" value="THUMP_AdoMetMT"/>
    <property type="match status" value="1"/>
</dbReference>
<dbReference type="Gene3D" id="3.30.2130.30">
    <property type="match status" value="1"/>
</dbReference>
<dbReference type="Gene3D" id="3.30.750.80">
    <property type="entry name" value="RNA methyltransferase domain (HRMD) like"/>
    <property type="match status" value="1"/>
</dbReference>
<dbReference type="Gene3D" id="3.40.50.150">
    <property type="entry name" value="Vaccinia Virus protein VP39"/>
    <property type="match status" value="2"/>
</dbReference>
<dbReference type="HAMAP" id="MF_01858">
    <property type="entry name" value="23SrRNA_methyltr_KL"/>
    <property type="match status" value="1"/>
</dbReference>
<dbReference type="InterPro" id="IPR017244">
    <property type="entry name" value="23SrRNA_methyltr_KL"/>
</dbReference>
<dbReference type="InterPro" id="IPR002052">
    <property type="entry name" value="DNA_methylase_N6_adenine_CS"/>
</dbReference>
<dbReference type="InterPro" id="IPR000241">
    <property type="entry name" value="RlmKL-like_Mtase"/>
</dbReference>
<dbReference type="InterPro" id="IPR054170">
    <property type="entry name" value="RlmL_1st"/>
</dbReference>
<dbReference type="InterPro" id="IPR019614">
    <property type="entry name" value="SAM-dep_methyl-trfase"/>
</dbReference>
<dbReference type="InterPro" id="IPR029063">
    <property type="entry name" value="SAM-dependent_MTases_sf"/>
</dbReference>
<dbReference type="InterPro" id="IPR004114">
    <property type="entry name" value="THUMP_dom"/>
</dbReference>
<dbReference type="NCBIfam" id="NF008748">
    <property type="entry name" value="PRK11783.1"/>
    <property type="match status" value="1"/>
</dbReference>
<dbReference type="PANTHER" id="PTHR47313">
    <property type="entry name" value="RIBOSOMAL RNA LARGE SUBUNIT METHYLTRANSFERASE K/L"/>
    <property type="match status" value="1"/>
</dbReference>
<dbReference type="PANTHER" id="PTHR47313:SF1">
    <property type="entry name" value="RIBOSOMAL RNA LARGE SUBUNIT METHYLTRANSFERASE K_L"/>
    <property type="match status" value="1"/>
</dbReference>
<dbReference type="Pfam" id="PF10672">
    <property type="entry name" value="Methyltrans_SAM"/>
    <property type="match status" value="1"/>
</dbReference>
<dbReference type="Pfam" id="PF22020">
    <property type="entry name" value="RlmL_1st"/>
    <property type="match status" value="1"/>
</dbReference>
<dbReference type="Pfam" id="PF02926">
    <property type="entry name" value="THUMP"/>
    <property type="match status" value="1"/>
</dbReference>
<dbReference type="Pfam" id="PF01170">
    <property type="entry name" value="UPF0020"/>
    <property type="match status" value="1"/>
</dbReference>
<dbReference type="PIRSF" id="PIRSF037618">
    <property type="entry name" value="RNA_Mtase_bacteria_prd"/>
    <property type="match status" value="1"/>
</dbReference>
<dbReference type="SMART" id="SM00981">
    <property type="entry name" value="THUMP"/>
    <property type="match status" value="1"/>
</dbReference>
<dbReference type="SUPFAM" id="SSF53335">
    <property type="entry name" value="S-adenosyl-L-methionine-dependent methyltransferases"/>
    <property type="match status" value="2"/>
</dbReference>
<dbReference type="PROSITE" id="PS51165">
    <property type="entry name" value="THUMP"/>
    <property type="match status" value="1"/>
</dbReference>
<organism>
    <name type="scientific">Pseudomonas syringae pv. syringae (strain B728a)</name>
    <dbReference type="NCBI Taxonomy" id="205918"/>
    <lineage>
        <taxon>Bacteria</taxon>
        <taxon>Pseudomonadati</taxon>
        <taxon>Pseudomonadota</taxon>
        <taxon>Gammaproteobacteria</taxon>
        <taxon>Pseudomonadales</taxon>
        <taxon>Pseudomonadaceae</taxon>
        <taxon>Pseudomonas</taxon>
        <taxon>Pseudomonas syringae</taxon>
    </lineage>
</organism>
<evidence type="ECO:0000255" key="1">
    <source>
        <dbReference type="HAMAP-Rule" id="MF_01858"/>
    </source>
</evidence>
<comment type="function">
    <text evidence="1">Specifically methylates the guanine in position 2445 (m2G2445) and the guanine in position 2069 (m7G2069) of 23S rRNA.</text>
</comment>
<comment type="catalytic activity">
    <reaction evidence="1">
        <text>guanosine(2445) in 23S rRNA + S-adenosyl-L-methionine = N(2)-methylguanosine(2445) in 23S rRNA + S-adenosyl-L-homocysteine + H(+)</text>
        <dbReference type="Rhea" id="RHEA:42740"/>
        <dbReference type="Rhea" id="RHEA-COMP:10215"/>
        <dbReference type="Rhea" id="RHEA-COMP:10216"/>
        <dbReference type="ChEBI" id="CHEBI:15378"/>
        <dbReference type="ChEBI" id="CHEBI:57856"/>
        <dbReference type="ChEBI" id="CHEBI:59789"/>
        <dbReference type="ChEBI" id="CHEBI:74269"/>
        <dbReference type="ChEBI" id="CHEBI:74481"/>
        <dbReference type="EC" id="2.1.1.173"/>
    </reaction>
</comment>
<comment type="catalytic activity">
    <reaction evidence="1">
        <text>guanosine(2069) in 23S rRNA + S-adenosyl-L-methionine = N(2)-methylguanosine(2069) in 23S rRNA + S-adenosyl-L-homocysteine + H(+)</text>
        <dbReference type="Rhea" id="RHEA:43772"/>
        <dbReference type="Rhea" id="RHEA-COMP:10688"/>
        <dbReference type="Rhea" id="RHEA-COMP:10689"/>
        <dbReference type="ChEBI" id="CHEBI:15378"/>
        <dbReference type="ChEBI" id="CHEBI:57856"/>
        <dbReference type="ChEBI" id="CHEBI:59789"/>
        <dbReference type="ChEBI" id="CHEBI:74269"/>
        <dbReference type="ChEBI" id="CHEBI:74481"/>
        <dbReference type="EC" id="2.1.1.264"/>
    </reaction>
</comment>
<comment type="subcellular location">
    <subcellularLocation>
        <location evidence="1">Cytoplasm</location>
    </subcellularLocation>
</comment>
<comment type="similarity">
    <text evidence="1">Belongs to the methyltransferase superfamily. RlmKL family.</text>
</comment>
<name>RLMKL_PSEU2</name>
<protein>
    <recommendedName>
        <fullName evidence="1">Ribosomal RNA large subunit methyltransferase K/L</fullName>
    </recommendedName>
    <domain>
        <recommendedName>
            <fullName evidence="1">23S rRNA m2G2445 methyltransferase</fullName>
            <ecNumber evidence="1">2.1.1.173</ecNumber>
        </recommendedName>
        <alternativeName>
            <fullName evidence="1">rRNA (guanine-N(2)-)-methyltransferase RlmL</fullName>
        </alternativeName>
    </domain>
    <domain>
        <recommendedName>
            <fullName evidence="1">23S rRNA m7G2069 methyltransferase</fullName>
            <ecNumber evidence="1">2.1.1.264</ecNumber>
        </recommendedName>
        <alternativeName>
            <fullName evidence="1">rRNA (guanine-N(7)-)-methyltransferase RlmK</fullName>
        </alternativeName>
    </domain>
</protein>
<proteinExistence type="inferred from homology"/>
<sequence>MSDRYELFLTCPKGLEGLLAEEATALGLQETREHTSAIRGSADMETAYRLCLWSRLANRVLLVLKRFPMKDAEDLYHGVLDVEWQDHLESDGTIAVEFSGHGSGIDNTHFGALKVKDAIVDKLRTPDGERPSVDKINPDLRVHLRLDRGEAILSLDLSGHSLHQRGYRLQQGAAPLKENLAAAILIRAGWPRIAAEGGALADPMCGVGTFLVEAGMIAADIAPNIKRERWGFSAWLGHVPALWRKLHDEALARAEAGLAKTPSWIRGYEADPRLIQPGRNNIERAGLSDWIKVYQGEVATFEPRPDQNQKGLVICNPPYGERLGDEASLLYLYQNLGERLRQACLNWEAAVFTGAPDLGKRMGIRSHKQYSFWNGALPCKLLLIKVTPDQFVTGERRTPEQRQIERENPVEVEVVERKLNKNGNPIKPEPVVVEQARLSEGGQMFANRLQKNLKLMGKWVRREGIDCYRVYDADMPEYSLAIDLYHDWVHVQEYAAPKSIDPEKASARLFDALAAIPQALNIDKNRVVIKRRERQSGTKQYERQSAQGQFLEVSEGGVKLLVNLTDYLDTGLFLDHRPMRMRIQREASGKRFLNLFAYTATASVHAAKGGARSTTSVDLSRTYLDWARRNLSLNGFSDKNRLEQGDVMAWLQANRDEYDLIFIDPPTFSNSKRMEGIFDVQRDQVELIDLAMARLAPGGVLYFSNNFRKFVLDENLSQRYAVEDITAHTIDQDFARNGKIHRAWKIMARS</sequence>
<gene>
    <name evidence="1" type="primary">rlmL</name>
    <name type="ordered locus">Psyr_2108</name>
</gene>
<keyword id="KW-0963">Cytoplasm</keyword>
<keyword id="KW-0489">Methyltransferase</keyword>
<keyword id="KW-0694">RNA-binding</keyword>
<keyword id="KW-0698">rRNA processing</keyword>
<keyword id="KW-0949">S-adenosyl-L-methionine</keyword>
<keyword id="KW-0808">Transferase</keyword>
<accession>Q4ZUM1</accession>
<reference key="1">
    <citation type="journal article" date="2005" name="Proc. Natl. Acad. Sci. U.S.A.">
        <title>Comparison of the complete genome sequences of Pseudomonas syringae pv. syringae B728a and pv. tomato DC3000.</title>
        <authorList>
            <person name="Feil H."/>
            <person name="Feil W.S."/>
            <person name="Chain P."/>
            <person name="Larimer F."/>
            <person name="Dibartolo G."/>
            <person name="Copeland A."/>
            <person name="Lykidis A."/>
            <person name="Trong S."/>
            <person name="Nolan M."/>
            <person name="Goltsman E."/>
            <person name="Thiel J."/>
            <person name="Malfatti S."/>
            <person name="Loper J.E."/>
            <person name="Lapidus A."/>
            <person name="Detter J.C."/>
            <person name="Land M."/>
            <person name="Richardson P.M."/>
            <person name="Kyrpides N.C."/>
            <person name="Ivanova N."/>
            <person name="Lindow S.E."/>
        </authorList>
    </citation>
    <scope>NUCLEOTIDE SEQUENCE [LARGE SCALE GENOMIC DNA]</scope>
    <source>
        <strain>B728a</strain>
    </source>
</reference>
<feature type="chain" id="PRO_0000366797" description="Ribosomal RNA large subunit methyltransferase K/L">
    <location>
        <begin position="1"/>
        <end position="750"/>
    </location>
</feature>
<feature type="domain" description="THUMP" evidence="1">
    <location>
        <begin position="46"/>
        <end position="157"/>
    </location>
</feature>